<accession>A4PBQ0</accession>
<name>NSP11_RGDV</name>
<sequence length="206" mass="23532">MTSNEENPVGVQTLKPNNDAKRVFEMRKIPSSNVMRVEYTKQSKYRTCVCPSALHFAEECPSNDVLFSVGAHRNMLCVAKAFDQTKPRGMQRGNRRNNVAKVMTLNELMPKDDSNDRKKAKTSKDRKVEKSSRGRASSSRSRGRGGFSRNGRDRRETDSQDEYSEDNSYKSEEESTEDETAPLTKKDMLKMMSMFQSGAKSKRRPR</sequence>
<reference key="1">
    <citation type="journal article" date="2007" name="Arch. Virol.">
        <title>Molecular analysis of the genome segments S1, S4, S6, S7 and S12 of a Rice gall dwarf virus isolate from Thailand; completion of the genomic sequence.</title>
        <authorList>
            <person name="Moriyasu Y."/>
            <person name="Maruyama-Funatsuki W."/>
            <person name="Kikuchi A."/>
            <person name="Ichimi K."/>
            <person name="Zhong B."/>
            <person name="Yan J."/>
            <person name="Zhu Y."/>
            <person name="Suga H."/>
            <person name="Watanabe Y."/>
            <person name="Ichiki-Uehara T."/>
            <person name="Shimizu T."/>
            <person name="Hagiwara K."/>
            <person name="Kamiunten H."/>
            <person name="Akutsu K."/>
            <person name="Omura T."/>
        </authorList>
    </citation>
    <scope>NUCLEOTIDE SEQUENCE [GENOMIC RNA]</scope>
</reference>
<proteinExistence type="inferred from homology"/>
<organism>
    <name type="scientific">Rice gall dwarf virus</name>
    <name type="common">RGDV</name>
    <dbReference type="NCBI Taxonomy" id="10986"/>
    <lineage>
        <taxon>Viruses</taxon>
        <taxon>Riboviria</taxon>
        <taxon>Orthornavirae</taxon>
        <taxon>Duplornaviricota</taxon>
        <taxon>Resentoviricetes</taxon>
        <taxon>Reovirales</taxon>
        <taxon>Sedoreoviridae</taxon>
        <taxon>Phytoreovirus</taxon>
    </lineage>
</organism>
<comment type="function">
    <text evidence="1">Constituent of viral factories. Binds to ssRNA and dsRNA (By similarity).</text>
</comment>
<comment type="subcellular location">
    <subcellularLocation>
        <location evidence="1">Host cytoplasm</location>
    </subcellularLocation>
    <text evidence="1">Constituent of spherical cytoplasmic structures, called virus factories, that appear early after infection and are the site of viral replication and packaging.</text>
</comment>
<comment type="similarity">
    <text evidence="3">Belongs to the phytoreovirus RNA-binding protein family.</text>
</comment>
<dbReference type="EMBL" id="AB254455">
    <property type="protein sequence ID" value="BAF49643.1"/>
    <property type="molecule type" value="Genomic_RNA"/>
</dbReference>
<dbReference type="RefSeq" id="YP_001111377.1">
    <property type="nucleotide sequence ID" value="NC_009252.1"/>
</dbReference>
<dbReference type="GeneID" id="4955115"/>
<dbReference type="KEGG" id="vg:4955115"/>
<dbReference type="OrthoDB" id="28784at10239"/>
<dbReference type="Proteomes" id="UP000006720">
    <property type="component" value="Genome"/>
</dbReference>
<dbReference type="GO" id="GO:0030430">
    <property type="term" value="C:host cell cytoplasm"/>
    <property type="evidence" value="ECO:0007669"/>
    <property type="project" value="UniProtKB-SubCell"/>
</dbReference>
<dbReference type="GO" id="GO:0003723">
    <property type="term" value="F:RNA binding"/>
    <property type="evidence" value="ECO:0007669"/>
    <property type="project" value="UniProtKB-KW"/>
</dbReference>
<dbReference type="InterPro" id="IPR035351">
    <property type="entry name" value="Pns11/12"/>
</dbReference>
<dbReference type="Pfam" id="PF17464">
    <property type="entry name" value="Pns11_12"/>
    <property type="match status" value="1"/>
</dbReference>
<feature type="chain" id="PRO_0000402401" description="RNA-binding protein">
    <location>
        <begin position="1"/>
        <end position="206"/>
    </location>
</feature>
<feature type="region of interest" description="Disordered" evidence="2">
    <location>
        <begin position="87"/>
        <end position="206"/>
    </location>
</feature>
<feature type="compositionally biased region" description="Basic and acidic residues" evidence="2">
    <location>
        <begin position="109"/>
        <end position="132"/>
    </location>
</feature>
<organismHost>
    <name type="scientific">Nephotettix cincticeps</name>
    <name type="common">Green rice leafhopper</name>
    <name type="synonym">Selenocephalus cincticeps</name>
    <dbReference type="NCBI Taxonomy" id="94400"/>
</organismHost>
<organismHost>
    <name type="scientific">Oryza sativa</name>
    <name type="common">Rice</name>
    <dbReference type="NCBI Taxonomy" id="4530"/>
</organismHost>
<protein>
    <recommendedName>
        <fullName>RNA-binding protein</fullName>
    </recommendedName>
    <alternativeName>
        <fullName>Non-structural protein 12</fullName>
        <shortName>Pns12</shortName>
    </alternativeName>
</protein>
<keyword id="KW-1035">Host cytoplasm</keyword>
<keyword id="KW-1185">Reference proteome</keyword>
<keyword id="KW-0694">RNA-binding</keyword>
<evidence type="ECO:0000250" key="1"/>
<evidence type="ECO:0000256" key="2">
    <source>
        <dbReference type="SAM" id="MobiDB-lite"/>
    </source>
</evidence>
<evidence type="ECO:0000305" key="3"/>